<protein>
    <recommendedName>
        <fullName evidence="5">Phosphatidylserine lipase ABHD16A</fullName>
        <ecNumber evidence="3">3.1.-.-</ecNumber>
    </recommendedName>
    <alternativeName>
        <fullName evidence="5">Alpha/beta hydrolase domain-containing protein 16A</fullName>
        <shortName evidence="5">Abhydrolase domain-containing protein 16A</shortName>
    </alternativeName>
    <alternativeName>
        <fullName evidence="1">HLA-B-associated transcript 5 homolog</fullName>
    </alternativeName>
    <alternativeName>
        <fullName evidence="5">Monoacylglycerol lipase ABHD16A</fullName>
        <ecNumber evidence="1">3.1.1.23</ecNumber>
    </alternativeName>
</protein>
<comment type="function">
    <text evidence="1 3">Phosphatidylserine (PS) lipase that mediates the hydrolysis of phosphatidylserine to generate lysophosphatidylserine (LPS). LPS constitutes a class of signaling lipids that regulates immunological and neurological processes (By similarity). Has no activity towards diacylglycerol, triacylglycerol or lysophosphatidylserine lipase (By similarity). Also has monoacylglycerol lipase activity, with preference for 1-(9Z,12Z-octadecadienoyl)-glycerol (1-LG) and 2-glyceryl-15-deoxy-Delta(12,14)-prostaglandin J2 (15d-PGJ(2)-G) (By similarity).</text>
</comment>
<comment type="catalytic activity">
    <reaction evidence="3">
        <text>1-heptadecanoyl-2-(5Z,8Z,11Z,14Z-eicosatetraenoyl)-sn-glycero-3-phosphoserine + H2O = 1-heptadecanoyl-sn-glycero-3-phosphoserine + (5Z,8Z,11Z,14Z)-eicosatetraenoate + H(+)</text>
        <dbReference type="Rhea" id="RHEA:44500"/>
        <dbReference type="ChEBI" id="CHEBI:15377"/>
        <dbReference type="ChEBI" id="CHEBI:15378"/>
        <dbReference type="ChEBI" id="CHEBI:32395"/>
        <dbReference type="ChEBI" id="CHEBI:84461"/>
        <dbReference type="ChEBI" id="CHEBI:84462"/>
    </reaction>
</comment>
<comment type="catalytic activity">
    <reaction evidence="3">
        <text>1-hexadecanoyl-2-(9Z-octadecenoyl)-sn-glycero-3-phospho-L-serine + H2O = 1-hexadecanoyl-sn-glycero-3-phospho-L-serine + (9Z)-octadecenoate + H(+)</text>
        <dbReference type="Rhea" id="RHEA:41752"/>
        <dbReference type="ChEBI" id="CHEBI:15377"/>
        <dbReference type="ChEBI" id="CHEBI:15378"/>
        <dbReference type="ChEBI" id="CHEBI:30823"/>
        <dbReference type="ChEBI" id="CHEBI:75020"/>
        <dbReference type="ChEBI" id="CHEBI:75029"/>
    </reaction>
</comment>
<comment type="catalytic activity">
    <reaction evidence="3">
        <text>1-octadecanoyl-2-(9Z,12Z-octadecadienoyl)-sn-glycero-3-phosphoserine + H2O = 1-octadecanoyl-sn-glycero-3-phosphoserine + (9Z,12Z)-octadecadienoate + H(+)</text>
        <dbReference type="Rhea" id="RHEA:44516"/>
        <dbReference type="ChEBI" id="CHEBI:15377"/>
        <dbReference type="ChEBI" id="CHEBI:15378"/>
        <dbReference type="ChEBI" id="CHEBI:30245"/>
        <dbReference type="ChEBI" id="CHEBI:84466"/>
        <dbReference type="ChEBI" id="CHEBI:84467"/>
    </reaction>
</comment>
<comment type="catalytic activity">
    <reaction evidence="3">
        <text>1-heptadecanoyl-2-(5Z,8Z,11Z,14Z-eicosatetraenoyl)-sn-glycero-3-phosphocholine + H2O = 1-heptadecanoyl-sn-glycero-3-phosphocholine + (5Z,8Z,11Z,14Z)-eicosatetraenoate + H(+)</text>
        <dbReference type="Rhea" id="RHEA:44520"/>
        <dbReference type="ChEBI" id="CHEBI:15377"/>
        <dbReference type="ChEBI" id="CHEBI:15378"/>
        <dbReference type="ChEBI" id="CHEBI:32395"/>
        <dbReference type="ChEBI" id="CHEBI:74340"/>
        <dbReference type="ChEBI" id="CHEBI:84470"/>
    </reaction>
</comment>
<comment type="catalytic activity">
    <reaction evidence="3">
        <text>1-hexadecanoyl-2-(9Z-octadecenoyl)-sn-glycero-3-phosphoglycerol + H2O = 1-hexadecanoyl-sn-glycero-3-phosphoglycerol + (9Z)-octadecenoate + H(+)</text>
        <dbReference type="Rhea" id="RHEA:44524"/>
        <dbReference type="ChEBI" id="CHEBI:15377"/>
        <dbReference type="ChEBI" id="CHEBI:15378"/>
        <dbReference type="ChEBI" id="CHEBI:30823"/>
        <dbReference type="ChEBI" id="CHEBI:84472"/>
        <dbReference type="ChEBI" id="CHEBI:84475"/>
    </reaction>
</comment>
<comment type="catalytic activity">
    <reaction evidence="3">
        <text>1-hexadecanoyl-2-(9Z-octadecenoyl)-sn-glycero-3-phospho-(1D-myo-inositol) + H2O = 1-hexadecanoyl-sn-glycero-3-phospho-(1D-myo-inositol) + (9Z)-octadecenoate + H(+)</text>
        <dbReference type="Rhea" id="RHEA:44528"/>
        <dbReference type="ChEBI" id="CHEBI:15377"/>
        <dbReference type="ChEBI" id="CHEBI:15378"/>
        <dbReference type="ChEBI" id="CHEBI:30823"/>
        <dbReference type="ChEBI" id="CHEBI:72833"/>
        <dbReference type="ChEBI" id="CHEBI:72837"/>
    </reaction>
</comment>
<comment type="catalytic activity">
    <reaction evidence="3">
        <text>1-heptadecanoyl-2-(5Z,8Z,11Z,14Z-eicosatetraenoyl)-sn-glycero-3-phosphoethanolamine + H2O = 1-heptadecanoyl-sn-glycero-3-phosphoethanolamine + (5Z,8Z,11Z,14Z)-eicosatetraenoate + H(+)</text>
        <dbReference type="Rhea" id="RHEA:44540"/>
        <dbReference type="ChEBI" id="CHEBI:15377"/>
        <dbReference type="ChEBI" id="CHEBI:15378"/>
        <dbReference type="ChEBI" id="CHEBI:32395"/>
        <dbReference type="ChEBI" id="CHEBI:84489"/>
        <dbReference type="ChEBI" id="CHEBI:84490"/>
    </reaction>
</comment>
<comment type="catalytic activity">
    <reaction evidence="3">
        <text>1-hexadecanoyl-2-(9Z-octadecenoyl)-sn-glycero-3-phospho-(1'-sn-glycerol) + H2O = 1-hexadecanoyl-sn-glycero-3-phospho-(1'-sn-glycerol) + (9Z)-octadecenoate + H(+)</text>
        <dbReference type="Rhea" id="RHEA:40919"/>
        <dbReference type="ChEBI" id="CHEBI:15377"/>
        <dbReference type="ChEBI" id="CHEBI:15378"/>
        <dbReference type="ChEBI" id="CHEBI:30823"/>
        <dbReference type="ChEBI" id="CHEBI:72841"/>
        <dbReference type="ChEBI" id="CHEBI:75158"/>
    </reaction>
</comment>
<comment type="catalytic activity">
    <reaction evidence="1">
        <text>Hydrolyzes glycerol monoesters of long-chain fatty acids.</text>
        <dbReference type="EC" id="3.1.1.23"/>
    </reaction>
</comment>
<comment type="catalytic activity">
    <reaction evidence="1">
        <text>1-tetradecanoylglycerol + H2O = tetradecanoate + glycerol + H(+)</text>
        <dbReference type="Rhea" id="RHEA:44312"/>
        <dbReference type="ChEBI" id="CHEBI:15377"/>
        <dbReference type="ChEBI" id="CHEBI:15378"/>
        <dbReference type="ChEBI" id="CHEBI:17754"/>
        <dbReference type="ChEBI" id="CHEBI:30807"/>
        <dbReference type="ChEBI" id="CHEBI:75562"/>
    </reaction>
</comment>
<comment type="catalytic activity">
    <reaction evidence="1">
        <text>2-hexadecanoylglycerol + H2O = glycerol + hexadecanoate + H(+)</text>
        <dbReference type="Rhea" id="RHEA:39963"/>
        <dbReference type="ChEBI" id="CHEBI:7896"/>
        <dbReference type="ChEBI" id="CHEBI:15377"/>
        <dbReference type="ChEBI" id="CHEBI:15378"/>
        <dbReference type="ChEBI" id="CHEBI:17754"/>
        <dbReference type="ChEBI" id="CHEBI:75455"/>
    </reaction>
</comment>
<comment type="catalytic activity">
    <reaction evidence="1">
        <text>1-(9Z-octadecenoyl)-glycerol + H2O = glycerol + (9Z)-octadecenoate + H(+)</text>
        <dbReference type="Rhea" id="RHEA:38487"/>
        <dbReference type="ChEBI" id="CHEBI:15377"/>
        <dbReference type="ChEBI" id="CHEBI:15378"/>
        <dbReference type="ChEBI" id="CHEBI:17754"/>
        <dbReference type="ChEBI" id="CHEBI:30823"/>
        <dbReference type="ChEBI" id="CHEBI:75342"/>
    </reaction>
</comment>
<comment type="catalytic activity">
    <reaction evidence="1">
        <text>2-(9Z-octadecenoyl)-glycerol + H2O = glycerol + (9Z)-octadecenoate + H(+)</text>
        <dbReference type="Rhea" id="RHEA:38491"/>
        <dbReference type="ChEBI" id="CHEBI:15377"/>
        <dbReference type="ChEBI" id="CHEBI:15378"/>
        <dbReference type="ChEBI" id="CHEBI:17754"/>
        <dbReference type="ChEBI" id="CHEBI:30823"/>
        <dbReference type="ChEBI" id="CHEBI:73990"/>
    </reaction>
</comment>
<comment type="catalytic activity">
    <reaction evidence="1">
        <text>2-(9Z,12Z-octadecadienoyl)-glycerol + H2O = (9Z,12Z)-octadecadienoate + glycerol + H(+)</text>
        <dbReference type="Rhea" id="RHEA:44732"/>
        <dbReference type="ChEBI" id="CHEBI:15377"/>
        <dbReference type="ChEBI" id="CHEBI:15378"/>
        <dbReference type="ChEBI" id="CHEBI:17754"/>
        <dbReference type="ChEBI" id="CHEBI:30245"/>
        <dbReference type="ChEBI" id="CHEBI:75457"/>
    </reaction>
</comment>
<comment type="catalytic activity">
    <reaction evidence="1">
        <text>1-(5Z,8Z,11Z,14Z-eicosatetraenoyl)-glycerol + H2O = glycerol + (5Z,8Z,11Z,14Z)-eicosatetraenoate + H(+)</text>
        <dbReference type="Rhea" id="RHEA:44728"/>
        <dbReference type="ChEBI" id="CHEBI:15377"/>
        <dbReference type="ChEBI" id="CHEBI:15378"/>
        <dbReference type="ChEBI" id="CHEBI:17754"/>
        <dbReference type="ChEBI" id="CHEBI:32395"/>
        <dbReference type="ChEBI" id="CHEBI:75612"/>
    </reaction>
</comment>
<comment type="catalytic activity">
    <reaction evidence="1">
        <text>2-(5Z,8Z,11Z,14Z-eicosatetraenoyl)-glycerol + H2O = glycerol + (5Z,8Z,11Z,14Z)-eicosatetraenoate + H(+)</text>
        <dbReference type="Rhea" id="RHEA:26132"/>
        <dbReference type="ChEBI" id="CHEBI:15377"/>
        <dbReference type="ChEBI" id="CHEBI:15378"/>
        <dbReference type="ChEBI" id="CHEBI:17754"/>
        <dbReference type="ChEBI" id="CHEBI:32395"/>
        <dbReference type="ChEBI" id="CHEBI:52392"/>
    </reaction>
</comment>
<comment type="catalytic activity">
    <reaction evidence="1">
        <text>prostaglandin D2-1-glycerol ester + H2O = prostaglandin D2 + glycerol + H(+)</text>
        <dbReference type="Rhea" id="RHEA:45412"/>
        <dbReference type="ChEBI" id="CHEBI:15377"/>
        <dbReference type="ChEBI" id="CHEBI:15378"/>
        <dbReference type="ChEBI" id="CHEBI:17754"/>
        <dbReference type="ChEBI" id="CHEBI:57406"/>
        <dbReference type="ChEBI" id="CHEBI:85232"/>
    </reaction>
</comment>
<comment type="catalytic activity">
    <reaction evidence="3">
        <text>2-glyceryl-15-deoxy-Delta(12,14)-prostaglandin J2 + H2O = 15-deoxy-Delta(12,14)-prostaglandin J2 + glycerol + H(+)</text>
        <dbReference type="Rhea" id="RHEA:45416"/>
        <dbReference type="ChEBI" id="CHEBI:15377"/>
        <dbReference type="ChEBI" id="CHEBI:15378"/>
        <dbReference type="ChEBI" id="CHEBI:17754"/>
        <dbReference type="ChEBI" id="CHEBI:85236"/>
        <dbReference type="ChEBI" id="CHEBI:85238"/>
    </reaction>
</comment>
<comment type="catalytic activity">
    <reaction evidence="3">
        <text>1-(9Z,12Z-octadecadienoyl)-glycerol + H2O = (9Z,12Z)-octadecadienoate + glycerol + H(+)</text>
        <dbReference type="Rhea" id="RHEA:48428"/>
        <dbReference type="ChEBI" id="CHEBI:15377"/>
        <dbReference type="ChEBI" id="CHEBI:15378"/>
        <dbReference type="ChEBI" id="CHEBI:17754"/>
        <dbReference type="ChEBI" id="CHEBI:30245"/>
        <dbReference type="ChEBI" id="CHEBI:75568"/>
    </reaction>
</comment>
<comment type="subcellular location">
    <subcellularLocation>
        <location evidence="3">Membrane</location>
        <topology evidence="4">Multi-pass membrane protein</topology>
    </subcellularLocation>
</comment>
<comment type="similarity">
    <text evidence="5">Belongs to the AB hydrolase superfamily. ABHD16 family.</text>
</comment>
<name>ABHGA_PONAB</name>
<keyword id="KW-0378">Hydrolase</keyword>
<keyword id="KW-0443">Lipid metabolism</keyword>
<keyword id="KW-0472">Membrane</keyword>
<keyword id="KW-1185">Reference proteome</keyword>
<keyword id="KW-0812">Transmembrane</keyword>
<keyword id="KW-1133">Transmembrane helix</keyword>
<dbReference type="EC" id="3.1.-.-" evidence="3"/>
<dbReference type="EC" id="3.1.1.23" evidence="1"/>
<dbReference type="EMBL" id="CR860415">
    <property type="protein sequence ID" value="CAH92540.1"/>
    <property type="molecule type" value="mRNA"/>
</dbReference>
<dbReference type="RefSeq" id="NP_001126487.1">
    <property type="nucleotide sequence ID" value="NM_001133015.1"/>
</dbReference>
<dbReference type="SMR" id="Q5R6S0"/>
<dbReference type="FunCoup" id="Q5R6S0">
    <property type="interactions" value="1409"/>
</dbReference>
<dbReference type="STRING" id="9601.ENSPPYP00000018394"/>
<dbReference type="ESTHER" id="ponpy-q5r6s0">
    <property type="family name" value="ABHD16"/>
</dbReference>
<dbReference type="MEROPS" id="S09.065"/>
<dbReference type="GeneID" id="100173474"/>
<dbReference type="KEGG" id="pon:100173474"/>
<dbReference type="CTD" id="7920"/>
<dbReference type="eggNOG" id="KOG1553">
    <property type="taxonomic scope" value="Eukaryota"/>
</dbReference>
<dbReference type="HOGENOM" id="CLU_040705_2_0_1"/>
<dbReference type="InParanoid" id="Q5R6S0"/>
<dbReference type="OrthoDB" id="6412627at2759"/>
<dbReference type="TreeFam" id="TF314267"/>
<dbReference type="Proteomes" id="UP000001595">
    <property type="component" value="Chromosome 6"/>
</dbReference>
<dbReference type="GO" id="GO:0012505">
    <property type="term" value="C:endomembrane system"/>
    <property type="evidence" value="ECO:0007669"/>
    <property type="project" value="TreeGrafter"/>
</dbReference>
<dbReference type="GO" id="GO:0016020">
    <property type="term" value="C:membrane"/>
    <property type="evidence" value="ECO:0007669"/>
    <property type="project" value="UniProtKB-SubCell"/>
</dbReference>
<dbReference type="GO" id="GO:0047372">
    <property type="term" value="F:monoacylglycerol lipase activity"/>
    <property type="evidence" value="ECO:0000250"/>
    <property type="project" value="UniProtKB"/>
</dbReference>
<dbReference type="GO" id="GO:0004620">
    <property type="term" value="F:phospholipase activity"/>
    <property type="evidence" value="ECO:0000250"/>
    <property type="project" value="UniProtKB"/>
</dbReference>
<dbReference type="GO" id="GO:0052651">
    <property type="term" value="P:monoacylglycerol catabolic process"/>
    <property type="evidence" value="ECO:0000250"/>
    <property type="project" value="UniProtKB"/>
</dbReference>
<dbReference type="GO" id="GO:0006660">
    <property type="term" value="P:phosphatidylserine catabolic process"/>
    <property type="evidence" value="ECO:0000250"/>
    <property type="project" value="UniProtKB"/>
</dbReference>
<dbReference type="FunFam" id="3.40.50.1820:FF:000074">
    <property type="entry name" value="Abhydrolase domain containing 16A"/>
    <property type="match status" value="1"/>
</dbReference>
<dbReference type="Gene3D" id="3.40.50.1820">
    <property type="entry name" value="alpha/beta hydrolase"/>
    <property type="match status" value="1"/>
</dbReference>
<dbReference type="InterPro" id="IPR000073">
    <property type="entry name" value="AB_hydrolase_1"/>
</dbReference>
<dbReference type="InterPro" id="IPR029058">
    <property type="entry name" value="AB_hydrolase_fold"/>
</dbReference>
<dbReference type="InterPro" id="IPR054518">
    <property type="entry name" value="ABHD16_N"/>
</dbReference>
<dbReference type="PANTHER" id="PTHR12277">
    <property type="entry name" value="ALPHA/BETA HYDROLASE DOMAIN-CONTAINING PROTEIN"/>
    <property type="match status" value="1"/>
</dbReference>
<dbReference type="PANTHER" id="PTHR12277:SF54">
    <property type="entry name" value="PHOSPHATIDYLSERINE LIPASE ABHD16A"/>
    <property type="match status" value="1"/>
</dbReference>
<dbReference type="Pfam" id="PF22990">
    <property type="entry name" value="ABHD16_N"/>
    <property type="match status" value="1"/>
</dbReference>
<dbReference type="Pfam" id="PF00561">
    <property type="entry name" value="Abhydrolase_1"/>
    <property type="match status" value="1"/>
</dbReference>
<dbReference type="SUPFAM" id="SSF53474">
    <property type="entry name" value="alpha/beta-Hydrolases"/>
    <property type="match status" value="1"/>
</dbReference>
<proteinExistence type="evidence at transcript level"/>
<gene>
    <name evidence="1" type="primary">ABHD16A</name>
    <name evidence="1" type="synonym">BAT5</name>
</gene>
<sequence length="558" mass="63183">MAKLLSCVLGPRLYKIYRERDSERAPASVPETPTAVTAPHSSSWDTYYQPRALEKHADSILALASVFWSISYYSSPFAFFYLYRKGYLSLSKVVPFSHYAGTLLLLLAGVACLRGIGRWTNPQYRQFITILEATHRNQSSENKRQLANYNFDFRSWPVDFHWEEPSSRKESRGGPSRQGVALLRPEPLHRGTADTLLNRVKKLPCQITSYLVAHTLGRRMLYPGSVYLLQKALMPVLLQGQARLVEECNGRRAKLLACDGNEIDTMFVDRRGTAEPQGQKLVICCEGNAGFYEVGCVSTPLEAGYSVLGWNHPGFAGSTGVPFPQNEANAMDVVVQFAIHRLGFQPQDIIIYAWSIGGFTATWAAMSYPDVSAVILDASFDDLVPLALKVMPDSWRGLVTRTVRQHLNLNNAEQLCRYQGPVLLIRRTKDEIITTTVPEDIMSNRGNDLLLKLLQHRYPRVMAEEGLRVVRQWLEASSQLEEASIYSRWEVEEDWCLSVLRSYQAEHGPDFPWSVGEDMSADGRRQLALFLARKHLHNFEATHCTPLPAQNFQMPWHL</sequence>
<evidence type="ECO:0000250" key="1">
    <source>
        <dbReference type="UniProtKB" id="O95870"/>
    </source>
</evidence>
<evidence type="ECO:0000250" key="2">
    <source>
        <dbReference type="UniProtKB" id="Q8N2K0"/>
    </source>
</evidence>
<evidence type="ECO:0000250" key="3">
    <source>
        <dbReference type="UniProtKB" id="Q9Z1Q2"/>
    </source>
</evidence>
<evidence type="ECO:0000255" key="4"/>
<evidence type="ECO:0000305" key="5"/>
<accession>Q5R6S0</accession>
<feature type="chain" id="PRO_0000333743" description="Phosphatidylserine lipase ABHD16A">
    <location>
        <begin position="1"/>
        <end position="558"/>
    </location>
</feature>
<feature type="transmembrane region" description="Helical" evidence="4">
    <location>
        <begin position="60"/>
        <end position="80"/>
    </location>
</feature>
<feature type="transmembrane region" description="Helical" evidence="4">
    <location>
        <begin position="93"/>
        <end position="113"/>
    </location>
</feature>
<feature type="topological domain" description="Cytoplasmic" evidence="3">
    <location>
        <begin position="114"/>
        <end position="558"/>
    </location>
</feature>
<feature type="domain" description="AB hydrolase-1" evidence="4">
    <location>
        <begin position="281"/>
        <end position="407"/>
    </location>
</feature>
<feature type="active site" description="Charge relay system" evidence="2">
    <location>
        <position position="355"/>
    </location>
</feature>
<feature type="active site" description="Charge relay system" evidence="2">
    <location>
        <position position="430"/>
    </location>
</feature>
<feature type="active site" description="Charge relay system" evidence="2">
    <location>
        <position position="507"/>
    </location>
</feature>
<reference key="1">
    <citation type="submission" date="2004-11" db="EMBL/GenBank/DDBJ databases">
        <authorList>
            <consortium name="The German cDNA consortium"/>
        </authorList>
    </citation>
    <scope>NUCLEOTIDE SEQUENCE [LARGE SCALE MRNA]</scope>
    <source>
        <tissue>Brain cortex</tissue>
    </source>
</reference>
<organism>
    <name type="scientific">Pongo abelii</name>
    <name type="common">Sumatran orangutan</name>
    <name type="synonym">Pongo pygmaeus abelii</name>
    <dbReference type="NCBI Taxonomy" id="9601"/>
    <lineage>
        <taxon>Eukaryota</taxon>
        <taxon>Metazoa</taxon>
        <taxon>Chordata</taxon>
        <taxon>Craniata</taxon>
        <taxon>Vertebrata</taxon>
        <taxon>Euteleostomi</taxon>
        <taxon>Mammalia</taxon>
        <taxon>Eutheria</taxon>
        <taxon>Euarchontoglires</taxon>
        <taxon>Primates</taxon>
        <taxon>Haplorrhini</taxon>
        <taxon>Catarrhini</taxon>
        <taxon>Hominidae</taxon>
        <taxon>Pongo</taxon>
    </lineage>
</organism>